<evidence type="ECO:0000255" key="1">
    <source>
        <dbReference type="HAMAP-Rule" id="MF_00139"/>
    </source>
</evidence>
<evidence type="ECO:0000255" key="2">
    <source>
        <dbReference type="PROSITE-ProRule" id="PRU01202"/>
    </source>
</evidence>
<sequence length="515" mass="56294">MTKRVLISVSDKAGIVEFAQELKKLGWEIISTGGTKVALDNAGVDTIAIDDVTGFPEMMDGRVKTLHPNIHGGLLARRDLDSHLEAAKDNKIELIDLVVVNLYPFKETILKPDVTYADAVENIDIGGPSMLRSAAKNHASVTVVVDPADYAVVLDELAANGETSYETRQRLAAKVFRHTAAYDALIAEYFTAQVGESKPEKLTLTYDLKQPMRYGENPQQDADFYQKALPTDYSIASAKQLNGKELSFNNIRDADAAIRIIRDFKDSPTVVALKHMNPCGIGQADDIETAWDYAYESDPVSIFGGIVVLNREVDAATAEKMHGVFLEIIIAPSYTDEALAILINKKKNLRILALPFNAQEASEVEAEYTGVVGGLLVQNQDVVKESPADWQVVTKRQPTETEATALEFAWKAIKYVKSNGIIVTNDHMTLGVGPGQTNRVASVRLAIDQAKDRLDGAVLASDAFFPFADNVEEIAKAGIKAIIQPGGSVRDQESIEAADKYGLTMVFTGVRHFRH</sequence>
<reference key="1">
    <citation type="journal article" date="2010" name="Genome Biol.">
        <title>Structure and dynamics of the pan-genome of Streptococcus pneumoniae and closely related species.</title>
        <authorList>
            <person name="Donati C."/>
            <person name="Hiller N.L."/>
            <person name="Tettelin H."/>
            <person name="Muzzi A."/>
            <person name="Croucher N.J."/>
            <person name="Angiuoli S.V."/>
            <person name="Oggioni M."/>
            <person name="Dunning Hotopp J.C."/>
            <person name="Hu F.Z."/>
            <person name="Riley D.R."/>
            <person name="Covacci A."/>
            <person name="Mitchell T.J."/>
            <person name="Bentley S.D."/>
            <person name="Kilian M."/>
            <person name="Ehrlich G.D."/>
            <person name="Rappuoli R."/>
            <person name="Moxon E.R."/>
            <person name="Masignani V."/>
        </authorList>
    </citation>
    <scope>NUCLEOTIDE SEQUENCE [LARGE SCALE GENOMIC DNA]</scope>
    <source>
        <strain>Taiwan19F-14</strain>
    </source>
</reference>
<comment type="catalytic activity">
    <reaction evidence="1">
        <text>(6R)-10-formyltetrahydrofolate + 5-amino-1-(5-phospho-beta-D-ribosyl)imidazole-4-carboxamide = 5-formamido-1-(5-phospho-D-ribosyl)imidazole-4-carboxamide + (6S)-5,6,7,8-tetrahydrofolate</text>
        <dbReference type="Rhea" id="RHEA:22192"/>
        <dbReference type="ChEBI" id="CHEBI:57453"/>
        <dbReference type="ChEBI" id="CHEBI:58467"/>
        <dbReference type="ChEBI" id="CHEBI:58475"/>
        <dbReference type="ChEBI" id="CHEBI:195366"/>
        <dbReference type="EC" id="2.1.2.3"/>
    </reaction>
</comment>
<comment type="catalytic activity">
    <reaction evidence="1">
        <text>IMP + H2O = 5-formamido-1-(5-phospho-D-ribosyl)imidazole-4-carboxamide</text>
        <dbReference type="Rhea" id="RHEA:18445"/>
        <dbReference type="ChEBI" id="CHEBI:15377"/>
        <dbReference type="ChEBI" id="CHEBI:58053"/>
        <dbReference type="ChEBI" id="CHEBI:58467"/>
        <dbReference type="EC" id="3.5.4.10"/>
    </reaction>
</comment>
<comment type="pathway">
    <text evidence="1">Purine metabolism; IMP biosynthesis via de novo pathway; 5-formamido-1-(5-phospho-D-ribosyl)imidazole-4-carboxamide from 5-amino-1-(5-phospho-D-ribosyl)imidazole-4-carboxamide (10-formyl THF route): step 1/1.</text>
</comment>
<comment type="pathway">
    <text evidence="1">Purine metabolism; IMP biosynthesis via de novo pathway; IMP from 5-formamido-1-(5-phospho-D-ribosyl)imidazole-4-carboxamide: step 1/1.</text>
</comment>
<comment type="domain">
    <text evidence="1">The IMP cyclohydrolase activity resides in the N-terminal region.</text>
</comment>
<comment type="similarity">
    <text evidence="1">Belongs to the PurH family.</text>
</comment>
<proteinExistence type="inferred from homology"/>
<feature type="chain" id="PRO_1000122978" description="Bifunctional purine biosynthesis protein PurH">
    <location>
        <begin position="1"/>
        <end position="515"/>
    </location>
</feature>
<feature type="domain" description="MGS-like" evidence="2">
    <location>
        <begin position="1"/>
        <end position="145"/>
    </location>
</feature>
<gene>
    <name evidence="1" type="primary">purH</name>
    <name type="ordered locus">SPT_0089</name>
</gene>
<keyword id="KW-0378">Hydrolase</keyword>
<keyword id="KW-0511">Multifunctional enzyme</keyword>
<keyword id="KW-0658">Purine biosynthesis</keyword>
<keyword id="KW-0808">Transferase</keyword>
<protein>
    <recommendedName>
        <fullName evidence="1">Bifunctional purine biosynthesis protein PurH</fullName>
    </recommendedName>
    <domain>
        <recommendedName>
            <fullName evidence="1">Phosphoribosylaminoimidazolecarboxamide formyltransferase</fullName>
            <ecNumber evidence="1">2.1.2.3</ecNumber>
        </recommendedName>
        <alternativeName>
            <fullName evidence="1">AICAR transformylase</fullName>
        </alternativeName>
    </domain>
    <domain>
        <recommendedName>
            <fullName evidence="1">IMP cyclohydrolase</fullName>
            <ecNumber evidence="1">3.5.4.10</ecNumber>
        </recommendedName>
        <alternativeName>
            <fullName evidence="1">ATIC</fullName>
        </alternativeName>
        <alternativeName>
            <fullName evidence="1">IMP synthase</fullName>
        </alternativeName>
        <alternativeName>
            <fullName evidence="1">Inosinicase</fullName>
        </alternativeName>
    </domain>
</protein>
<dbReference type="EC" id="2.1.2.3" evidence="1"/>
<dbReference type="EC" id="3.5.4.10" evidence="1"/>
<dbReference type="EMBL" id="CP000921">
    <property type="protein sequence ID" value="ACO22906.1"/>
    <property type="molecule type" value="Genomic_DNA"/>
</dbReference>
<dbReference type="RefSeq" id="WP_000167081.1">
    <property type="nucleotide sequence ID" value="NC_012469.1"/>
</dbReference>
<dbReference type="SMR" id="C1CNS9"/>
<dbReference type="KEGG" id="snt:SPT_0089"/>
<dbReference type="HOGENOM" id="CLU_016316_5_2_9"/>
<dbReference type="UniPathway" id="UPA00074">
    <property type="reaction ID" value="UER00133"/>
</dbReference>
<dbReference type="UniPathway" id="UPA00074">
    <property type="reaction ID" value="UER00135"/>
</dbReference>
<dbReference type="GO" id="GO:0005829">
    <property type="term" value="C:cytosol"/>
    <property type="evidence" value="ECO:0007669"/>
    <property type="project" value="TreeGrafter"/>
</dbReference>
<dbReference type="GO" id="GO:0003937">
    <property type="term" value="F:IMP cyclohydrolase activity"/>
    <property type="evidence" value="ECO:0007669"/>
    <property type="project" value="UniProtKB-UniRule"/>
</dbReference>
<dbReference type="GO" id="GO:0004643">
    <property type="term" value="F:phosphoribosylaminoimidazolecarboxamide formyltransferase activity"/>
    <property type="evidence" value="ECO:0007669"/>
    <property type="project" value="UniProtKB-UniRule"/>
</dbReference>
<dbReference type="GO" id="GO:0006189">
    <property type="term" value="P:'de novo' IMP biosynthetic process"/>
    <property type="evidence" value="ECO:0007669"/>
    <property type="project" value="UniProtKB-UniRule"/>
</dbReference>
<dbReference type="CDD" id="cd01421">
    <property type="entry name" value="IMPCH"/>
    <property type="match status" value="1"/>
</dbReference>
<dbReference type="FunFam" id="3.40.140.20:FF:000001">
    <property type="entry name" value="Bifunctional purine biosynthesis protein PurH"/>
    <property type="match status" value="1"/>
</dbReference>
<dbReference type="FunFam" id="3.40.140.20:FF:000002">
    <property type="entry name" value="Bifunctional purine biosynthesis protein PurH"/>
    <property type="match status" value="1"/>
</dbReference>
<dbReference type="FunFam" id="3.40.50.1380:FF:000001">
    <property type="entry name" value="Bifunctional purine biosynthesis protein PurH"/>
    <property type="match status" value="1"/>
</dbReference>
<dbReference type="Gene3D" id="3.40.140.20">
    <property type="match status" value="2"/>
</dbReference>
<dbReference type="Gene3D" id="3.40.50.1380">
    <property type="entry name" value="Methylglyoxal synthase-like domain"/>
    <property type="match status" value="1"/>
</dbReference>
<dbReference type="HAMAP" id="MF_00139">
    <property type="entry name" value="PurH"/>
    <property type="match status" value="1"/>
</dbReference>
<dbReference type="InterPro" id="IPR024051">
    <property type="entry name" value="AICAR_Tfase_dup_dom_sf"/>
</dbReference>
<dbReference type="InterPro" id="IPR016193">
    <property type="entry name" value="Cytidine_deaminase-like"/>
</dbReference>
<dbReference type="InterPro" id="IPR011607">
    <property type="entry name" value="MGS-like_dom"/>
</dbReference>
<dbReference type="InterPro" id="IPR036914">
    <property type="entry name" value="MGS-like_dom_sf"/>
</dbReference>
<dbReference type="InterPro" id="IPR002695">
    <property type="entry name" value="PurH-like"/>
</dbReference>
<dbReference type="NCBIfam" id="NF002049">
    <property type="entry name" value="PRK00881.1"/>
    <property type="match status" value="1"/>
</dbReference>
<dbReference type="NCBIfam" id="TIGR00355">
    <property type="entry name" value="purH"/>
    <property type="match status" value="1"/>
</dbReference>
<dbReference type="PANTHER" id="PTHR11692:SF0">
    <property type="entry name" value="BIFUNCTIONAL PURINE BIOSYNTHESIS PROTEIN ATIC"/>
    <property type="match status" value="1"/>
</dbReference>
<dbReference type="PANTHER" id="PTHR11692">
    <property type="entry name" value="BIFUNCTIONAL PURINE BIOSYNTHESIS PROTEIN PURH"/>
    <property type="match status" value="1"/>
</dbReference>
<dbReference type="Pfam" id="PF01808">
    <property type="entry name" value="AICARFT_IMPCHas"/>
    <property type="match status" value="1"/>
</dbReference>
<dbReference type="Pfam" id="PF02142">
    <property type="entry name" value="MGS"/>
    <property type="match status" value="1"/>
</dbReference>
<dbReference type="PIRSF" id="PIRSF000414">
    <property type="entry name" value="AICARFT_IMPCHas"/>
    <property type="match status" value="1"/>
</dbReference>
<dbReference type="SMART" id="SM00798">
    <property type="entry name" value="AICARFT_IMPCHas"/>
    <property type="match status" value="1"/>
</dbReference>
<dbReference type="SMART" id="SM00851">
    <property type="entry name" value="MGS"/>
    <property type="match status" value="1"/>
</dbReference>
<dbReference type="SUPFAM" id="SSF53927">
    <property type="entry name" value="Cytidine deaminase-like"/>
    <property type="match status" value="1"/>
</dbReference>
<dbReference type="SUPFAM" id="SSF52335">
    <property type="entry name" value="Methylglyoxal synthase-like"/>
    <property type="match status" value="1"/>
</dbReference>
<dbReference type="PROSITE" id="PS51855">
    <property type="entry name" value="MGS"/>
    <property type="match status" value="1"/>
</dbReference>
<name>PUR9_STRZT</name>
<accession>C1CNS9</accession>
<organism>
    <name type="scientific">Streptococcus pneumoniae (strain Taiwan19F-14)</name>
    <dbReference type="NCBI Taxonomy" id="487213"/>
    <lineage>
        <taxon>Bacteria</taxon>
        <taxon>Bacillati</taxon>
        <taxon>Bacillota</taxon>
        <taxon>Bacilli</taxon>
        <taxon>Lactobacillales</taxon>
        <taxon>Streptococcaceae</taxon>
        <taxon>Streptococcus</taxon>
    </lineage>
</organism>